<proteinExistence type="inferred from homology"/>
<sequence length="118" mass="13567">MPRVKRGVTARARHKKVLKLAKGYYGARSRTYRVAVQAVTKAGQYAYRDRRQKKRQFRQLWIARINAAARQNGLSYSRFINGLKKASIEIDRKILADIAVFDKVVFATLVEKAKEALN</sequence>
<comment type="function">
    <text evidence="1">Binds directly to 23S ribosomal RNA and is necessary for the in vitro assembly process of the 50S ribosomal subunit. It is not involved in the protein synthesizing functions of that subunit.</text>
</comment>
<comment type="similarity">
    <text evidence="1">Belongs to the bacterial ribosomal protein bL20 family.</text>
</comment>
<gene>
    <name evidence="1" type="primary">rplT</name>
    <name type="ordered locus">Shewana3_2046</name>
</gene>
<protein>
    <recommendedName>
        <fullName evidence="1">Large ribosomal subunit protein bL20</fullName>
    </recommendedName>
    <alternativeName>
        <fullName evidence="2">50S ribosomal protein L20</fullName>
    </alternativeName>
</protein>
<feature type="chain" id="PRO_1000049070" description="Large ribosomal subunit protein bL20">
    <location>
        <begin position="1"/>
        <end position="118"/>
    </location>
</feature>
<evidence type="ECO:0000255" key="1">
    <source>
        <dbReference type="HAMAP-Rule" id="MF_00382"/>
    </source>
</evidence>
<evidence type="ECO:0000305" key="2"/>
<keyword id="KW-0687">Ribonucleoprotein</keyword>
<keyword id="KW-0689">Ribosomal protein</keyword>
<keyword id="KW-0694">RNA-binding</keyword>
<keyword id="KW-0699">rRNA-binding</keyword>
<name>RL20_SHESA</name>
<dbReference type="EMBL" id="CP000469">
    <property type="protein sequence ID" value="ABK48276.1"/>
    <property type="molecule type" value="Genomic_DNA"/>
</dbReference>
<dbReference type="RefSeq" id="WP_006081652.1">
    <property type="nucleotide sequence ID" value="NC_008577.1"/>
</dbReference>
<dbReference type="SMR" id="A0KWV7"/>
<dbReference type="STRING" id="94122.Shewana3_2046"/>
<dbReference type="GeneID" id="94727990"/>
<dbReference type="KEGG" id="shn:Shewana3_2046"/>
<dbReference type="eggNOG" id="COG0292">
    <property type="taxonomic scope" value="Bacteria"/>
</dbReference>
<dbReference type="HOGENOM" id="CLU_123265_0_1_6"/>
<dbReference type="OrthoDB" id="9808966at2"/>
<dbReference type="Proteomes" id="UP000002589">
    <property type="component" value="Chromosome"/>
</dbReference>
<dbReference type="GO" id="GO:1990904">
    <property type="term" value="C:ribonucleoprotein complex"/>
    <property type="evidence" value="ECO:0007669"/>
    <property type="project" value="UniProtKB-KW"/>
</dbReference>
<dbReference type="GO" id="GO:0005840">
    <property type="term" value="C:ribosome"/>
    <property type="evidence" value="ECO:0007669"/>
    <property type="project" value="UniProtKB-KW"/>
</dbReference>
<dbReference type="GO" id="GO:0019843">
    <property type="term" value="F:rRNA binding"/>
    <property type="evidence" value="ECO:0007669"/>
    <property type="project" value="UniProtKB-UniRule"/>
</dbReference>
<dbReference type="GO" id="GO:0003735">
    <property type="term" value="F:structural constituent of ribosome"/>
    <property type="evidence" value="ECO:0007669"/>
    <property type="project" value="InterPro"/>
</dbReference>
<dbReference type="GO" id="GO:0000027">
    <property type="term" value="P:ribosomal large subunit assembly"/>
    <property type="evidence" value="ECO:0007669"/>
    <property type="project" value="UniProtKB-UniRule"/>
</dbReference>
<dbReference type="GO" id="GO:0006412">
    <property type="term" value="P:translation"/>
    <property type="evidence" value="ECO:0007669"/>
    <property type="project" value="InterPro"/>
</dbReference>
<dbReference type="CDD" id="cd07026">
    <property type="entry name" value="Ribosomal_L20"/>
    <property type="match status" value="1"/>
</dbReference>
<dbReference type="FunFam" id="1.10.1900.20:FF:000001">
    <property type="entry name" value="50S ribosomal protein L20"/>
    <property type="match status" value="1"/>
</dbReference>
<dbReference type="Gene3D" id="6.10.160.10">
    <property type="match status" value="1"/>
</dbReference>
<dbReference type="Gene3D" id="1.10.1900.20">
    <property type="entry name" value="Ribosomal protein L20"/>
    <property type="match status" value="1"/>
</dbReference>
<dbReference type="HAMAP" id="MF_00382">
    <property type="entry name" value="Ribosomal_bL20"/>
    <property type="match status" value="1"/>
</dbReference>
<dbReference type="InterPro" id="IPR005813">
    <property type="entry name" value="Ribosomal_bL20"/>
</dbReference>
<dbReference type="InterPro" id="IPR049946">
    <property type="entry name" value="RIBOSOMAL_L20_CS"/>
</dbReference>
<dbReference type="InterPro" id="IPR035566">
    <property type="entry name" value="Ribosomal_protein_bL20_C"/>
</dbReference>
<dbReference type="NCBIfam" id="TIGR01032">
    <property type="entry name" value="rplT_bact"/>
    <property type="match status" value="1"/>
</dbReference>
<dbReference type="PANTHER" id="PTHR10986">
    <property type="entry name" value="39S RIBOSOMAL PROTEIN L20"/>
    <property type="match status" value="1"/>
</dbReference>
<dbReference type="Pfam" id="PF00453">
    <property type="entry name" value="Ribosomal_L20"/>
    <property type="match status" value="1"/>
</dbReference>
<dbReference type="PRINTS" id="PR00062">
    <property type="entry name" value="RIBOSOMALL20"/>
</dbReference>
<dbReference type="SUPFAM" id="SSF74731">
    <property type="entry name" value="Ribosomal protein L20"/>
    <property type="match status" value="1"/>
</dbReference>
<dbReference type="PROSITE" id="PS00937">
    <property type="entry name" value="RIBOSOMAL_L20"/>
    <property type="match status" value="1"/>
</dbReference>
<organism>
    <name type="scientific">Shewanella sp. (strain ANA-3)</name>
    <dbReference type="NCBI Taxonomy" id="94122"/>
    <lineage>
        <taxon>Bacteria</taxon>
        <taxon>Pseudomonadati</taxon>
        <taxon>Pseudomonadota</taxon>
        <taxon>Gammaproteobacteria</taxon>
        <taxon>Alteromonadales</taxon>
        <taxon>Shewanellaceae</taxon>
        <taxon>Shewanella</taxon>
    </lineage>
</organism>
<accession>A0KWV7</accession>
<reference key="1">
    <citation type="submission" date="2006-09" db="EMBL/GenBank/DDBJ databases">
        <title>Complete sequence of chromosome 1 of Shewanella sp. ANA-3.</title>
        <authorList>
            <person name="Copeland A."/>
            <person name="Lucas S."/>
            <person name="Lapidus A."/>
            <person name="Barry K."/>
            <person name="Detter J.C."/>
            <person name="Glavina del Rio T."/>
            <person name="Hammon N."/>
            <person name="Israni S."/>
            <person name="Dalin E."/>
            <person name="Tice H."/>
            <person name="Pitluck S."/>
            <person name="Chertkov O."/>
            <person name="Brettin T."/>
            <person name="Bruce D."/>
            <person name="Han C."/>
            <person name="Tapia R."/>
            <person name="Gilna P."/>
            <person name="Schmutz J."/>
            <person name="Larimer F."/>
            <person name="Land M."/>
            <person name="Hauser L."/>
            <person name="Kyrpides N."/>
            <person name="Kim E."/>
            <person name="Newman D."/>
            <person name="Salticov C."/>
            <person name="Konstantinidis K."/>
            <person name="Klappenback J."/>
            <person name="Tiedje J."/>
            <person name="Richardson P."/>
        </authorList>
    </citation>
    <scope>NUCLEOTIDE SEQUENCE [LARGE SCALE GENOMIC DNA]</scope>
    <source>
        <strain>ANA-3</strain>
    </source>
</reference>